<protein>
    <recommendedName>
        <fullName evidence="1">Polyribonucleotide nucleotidyltransferase</fullName>
        <ecNumber evidence="1">2.7.7.8</ecNumber>
    </recommendedName>
    <alternativeName>
        <fullName evidence="1">Polynucleotide phosphorylase</fullName>
        <shortName evidence="1">PNPase</shortName>
    </alternativeName>
</protein>
<name>PNP_RUBXD</name>
<organism>
    <name type="scientific">Rubrobacter xylanophilus (strain DSM 9941 / JCM 11954 / NBRC 16129 / PRD-1)</name>
    <dbReference type="NCBI Taxonomy" id="266117"/>
    <lineage>
        <taxon>Bacteria</taxon>
        <taxon>Bacillati</taxon>
        <taxon>Actinomycetota</taxon>
        <taxon>Rubrobacteria</taxon>
        <taxon>Rubrobacterales</taxon>
        <taxon>Rubrobacteraceae</taxon>
        <taxon>Rubrobacter</taxon>
    </lineage>
</organism>
<proteinExistence type="inferred from homology"/>
<keyword id="KW-0963">Cytoplasm</keyword>
<keyword id="KW-0460">Magnesium</keyword>
<keyword id="KW-0479">Metal-binding</keyword>
<keyword id="KW-0548">Nucleotidyltransferase</keyword>
<keyword id="KW-1185">Reference proteome</keyword>
<keyword id="KW-0694">RNA-binding</keyword>
<keyword id="KW-0808">Transferase</keyword>
<reference key="1">
    <citation type="submission" date="2006-06" db="EMBL/GenBank/DDBJ databases">
        <title>Complete sequence of Rubrobacter xylanophilus DSM 9941.</title>
        <authorList>
            <consortium name="US DOE Joint Genome Institute"/>
            <person name="Copeland A."/>
            <person name="Lucas S."/>
            <person name="Lapidus A."/>
            <person name="Barry K."/>
            <person name="Detter J.C."/>
            <person name="Glavina del Rio T."/>
            <person name="Hammon N."/>
            <person name="Israni S."/>
            <person name="Dalin E."/>
            <person name="Tice H."/>
            <person name="Pitluck S."/>
            <person name="Munk A.C."/>
            <person name="Brettin T."/>
            <person name="Bruce D."/>
            <person name="Han C."/>
            <person name="Tapia R."/>
            <person name="Gilna P."/>
            <person name="Schmutz J."/>
            <person name="Larimer F."/>
            <person name="Land M."/>
            <person name="Hauser L."/>
            <person name="Kyrpides N."/>
            <person name="Lykidis A."/>
            <person name="da Costa M.S."/>
            <person name="Rainey F.A."/>
            <person name="Empadinhas N."/>
            <person name="Jolivet E."/>
            <person name="Battista J.R."/>
            <person name="Richardson P."/>
        </authorList>
    </citation>
    <scope>NUCLEOTIDE SEQUENCE [LARGE SCALE GENOMIC DNA]</scope>
    <source>
        <strain>DSM 9941 / JCM 11954 / NBRC 16129 / PRD-1</strain>
    </source>
</reference>
<gene>
    <name evidence="1" type="primary">pnp</name>
    <name type="ordered locus">Rxyl_1418</name>
</gene>
<sequence length="686" mass="74939">MRLEIPVGERAIVLETGKLARQAGGAVTARFGDTTVLSTATRSEEPRPGATFLPLSVDIEERMSSAGKIPGGFLKREGKPSEKAILTARLTDRPIRPLFPKDYYYEVQVIGTVLVADQENPYDVVSMVGASAALALSDIPFGGPIGAVRVGRHPDGGFILNPTYQQLEESDLDIVVAGTKEAITMVEAGAREVTEDVVVEALEVAQGVIREQAEAIERWAAEHGEEKQPFEEPGENPFVEELRGAYLERIKEGLISTDRRARHEAIDLLKEELVEGRSEEEVPLVLDALAQLQKEAFRKLYLEDRKRTDLRAFDEIRPTTAEAHVLPRVHGTGLFTRGETQVLSSLALADLGLVQRLDTLEPQTTKRYMHHYYFPPYSTGETGRLGPPRRREIGHGALAERALLPVIPSEEEFPYAIRIISEVLESNGSSSMASVCGSTLALMDGGVPIKAPVAGVAMGLVKEGDDYVILTDIQGLEDHMGDMDFKVAGTRDGITALQMDMKITGVSAELLKEALEQARRGRLQILDIMREEIAEPRPEISDHAPRVEVIQIPTDKIGLLIGPGGKTINALQDEYGVNISVENDGTVYVAGVEGMSVKAAVSAIKGMTKEVEAGDIYVGKVVKTTNFGAFVELTPGRDGLLHISRLAPGKQRVRRVEDVLNEGDVVKVRVLEIDKQNRISLEMVED</sequence>
<evidence type="ECO:0000255" key="1">
    <source>
        <dbReference type="HAMAP-Rule" id="MF_01595"/>
    </source>
</evidence>
<dbReference type="EC" id="2.7.7.8" evidence="1"/>
<dbReference type="EMBL" id="CP000386">
    <property type="protein sequence ID" value="ABG04380.1"/>
    <property type="molecule type" value="Genomic_DNA"/>
</dbReference>
<dbReference type="RefSeq" id="WP_011564397.1">
    <property type="nucleotide sequence ID" value="NC_008148.1"/>
</dbReference>
<dbReference type="SMR" id="Q1AW48"/>
<dbReference type="STRING" id="266117.Rxyl_1418"/>
<dbReference type="KEGG" id="rxy:Rxyl_1418"/>
<dbReference type="eggNOG" id="COG1185">
    <property type="taxonomic scope" value="Bacteria"/>
</dbReference>
<dbReference type="HOGENOM" id="CLU_004217_2_2_11"/>
<dbReference type="OrthoDB" id="9804305at2"/>
<dbReference type="PhylomeDB" id="Q1AW48"/>
<dbReference type="Proteomes" id="UP000006637">
    <property type="component" value="Chromosome"/>
</dbReference>
<dbReference type="GO" id="GO:0005829">
    <property type="term" value="C:cytosol"/>
    <property type="evidence" value="ECO:0007669"/>
    <property type="project" value="TreeGrafter"/>
</dbReference>
<dbReference type="GO" id="GO:0000175">
    <property type="term" value="F:3'-5'-RNA exonuclease activity"/>
    <property type="evidence" value="ECO:0007669"/>
    <property type="project" value="TreeGrafter"/>
</dbReference>
<dbReference type="GO" id="GO:0000287">
    <property type="term" value="F:magnesium ion binding"/>
    <property type="evidence" value="ECO:0007669"/>
    <property type="project" value="UniProtKB-UniRule"/>
</dbReference>
<dbReference type="GO" id="GO:0004654">
    <property type="term" value="F:polyribonucleotide nucleotidyltransferase activity"/>
    <property type="evidence" value="ECO:0007669"/>
    <property type="project" value="UniProtKB-UniRule"/>
</dbReference>
<dbReference type="GO" id="GO:0003723">
    <property type="term" value="F:RNA binding"/>
    <property type="evidence" value="ECO:0007669"/>
    <property type="project" value="UniProtKB-UniRule"/>
</dbReference>
<dbReference type="GO" id="GO:0006402">
    <property type="term" value="P:mRNA catabolic process"/>
    <property type="evidence" value="ECO:0007669"/>
    <property type="project" value="UniProtKB-UniRule"/>
</dbReference>
<dbReference type="CDD" id="cd02393">
    <property type="entry name" value="KH-I_PNPase"/>
    <property type="match status" value="1"/>
</dbReference>
<dbReference type="CDD" id="cd11363">
    <property type="entry name" value="RNase_PH_PNPase_1"/>
    <property type="match status" value="1"/>
</dbReference>
<dbReference type="CDD" id="cd11364">
    <property type="entry name" value="RNase_PH_PNPase_2"/>
    <property type="match status" value="1"/>
</dbReference>
<dbReference type="CDD" id="cd04472">
    <property type="entry name" value="S1_PNPase"/>
    <property type="match status" value="1"/>
</dbReference>
<dbReference type="FunFam" id="3.30.1370.10:FF:000001">
    <property type="entry name" value="Polyribonucleotide nucleotidyltransferase"/>
    <property type="match status" value="1"/>
</dbReference>
<dbReference type="FunFam" id="3.30.230.70:FF:000001">
    <property type="entry name" value="Polyribonucleotide nucleotidyltransferase"/>
    <property type="match status" value="1"/>
</dbReference>
<dbReference type="FunFam" id="3.30.230.70:FF:000002">
    <property type="entry name" value="Polyribonucleotide nucleotidyltransferase"/>
    <property type="match status" value="1"/>
</dbReference>
<dbReference type="Gene3D" id="3.30.230.70">
    <property type="entry name" value="GHMP Kinase, N-terminal domain"/>
    <property type="match status" value="2"/>
</dbReference>
<dbReference type="Gene3D" id="3.30.1370.10">
    <property type="entry name" value="K Homology domain, type 1"/>
    <property type="match status" value="1"/>
</dbReference>
<dbReference type="Gene3D" id="2.40.50.140">
    <property type="entry name" value="Nucleic acid-binding proteins"/>
    <property type="match status" value="1"/>
</dbReference>
<dbReference type="HAMAP" id="MF_01595">
    <property type="entry name" value="PNPase"/>
    <property type="match status" value="1"/>
</dbReference>
<dbReference type="InterPro" id="IPR001247">
    <property type="entry name" value="ExoRNase_PH_dom1"/>
</dbReference>
<dbReference type="InterPro" id="IPR015847">
    <property type="entry name" value="ExoRNase_PH_dom2"/>
</dbReference>
<dbReference type="InterPro" id="IPR036345">
    <property type="entry name" value="ExoRNase_PH_dom2_sf"/>
</dbReference>
<dbReference type="InterPro" id="IPR004087">
    <property type="entry name" value="KH_dom"/>
</dbReference>
<dbReference type="InterPro" id="IPR004088">
    <property type="entry name" value="KH_dom_type_1"/>
</dbReference>
<dbReference type="InterPro" id="IPR036612">
    <property type="entry name" value="KH_dom_type_1_sf"/>
</dbReference>
<dbReference type="InterPro" id="IPR012340">
    <property type="entry name" value="NA-bd_OB-fold"/>
</dbReference>
<dbReference type="InterPro" id="IPR012162">
    <property type="entry name" value="PNPase"/>
</dbReference>
<dbReference type="InterPro" id="IPR027408">
    <property type="entry name" value="PNPase/RNase_PH_dom_sf"/>
</dbReference>
<dbReference type="InterPro" id="IPR020568">
    <property type="entry name" value="Ribosomal_Su5_D2-typ_SF"/>
</dbReference>
<dbReference type="InterPro" id="IPR003029">
    <property type="entry name" value="S1_domain"/>
</dbReference>
<dbReference type="NCBIfam" id="TIGR03591">
    <property type="entry name" value="polynuc_phos"/>
    <property type="match status" value="1"/>
</dbReference>
<dbReference type="NCBIfam" id="NF008805">
    <property type="entry name" value="PRK11824.1"/>
    <property type="match status" value="1"/>
</dbReference>
<dbReference type="PANTHER" id="PTHR11252">
    <property type="entry name" value="POLYRIBONUCLEOTIDE NUCLEOTIDYLTRANSFERASE"/>
    <property type="match status" value="1"/>
</dbReference>
<dbReference type="PANTHER" id="PTHR11252:SF0">
    <property type="entry name" value="POLYRIBONUCLEOTIDE NUCLEOTIDYLTRANSFERASE 1, MITOCHONDRIAL"/>
    <property type="match status" value="1"/>
</dbReference>
<dbReference type="Pfam" id="PF00013">
    <property type="entry name" value="KH_1"/>
    <property type="match status" value="1"/>
</dbReference>
<dbReference type="Pfam" id="PF01138">
    <property type="entry name" value="RNase_PH"/>
    <property type="match status" value="2"/>
</dbReference>
<dbReference type="Pfam" id="PF03725">
    <property type="entry name" value="RNase_PH_C"/>
    <property type="match status" value="2"/>
</dbReference>
<dbReference type="Pfam" id="PF00575">
    <property type="entry name" value="S1"/>
    <property type="match status" value="1"/>
</dbReference>
<dbReference type="PIRSF" id="PIRSF005499">
    <property type="entry name" value="PNPase"/>
    <property type="match status" value="1"/>
</dbReference>
<dbReference type="SMART" id="SM00322">
    <property type="entry name" value="KH"/>
    <property type="match status" value="1"/>
</dbReference>
<dbReference type="SMART" id="SM00316">
    <property type="entry name" value="S1"/>
    <property type="match status" value="1"/>
</dbReference>
<dbReference type="SUPFAM" id="SSF54791">
    <property type="entry name" value="Eukaryotic type KH-domain (KH-domain type I)"/>
    <property type="match status" value="1"/>
</dbReference>
<dbReference type="SUPFAM" id="SSF50249">
    <property type="entry name" value="Nucleic acid-binding proteins"/>
    <property type="match status" value="1"/>
</dbReference>
<dbReference type="SUPFAM" id="SSF55666">
    <property type="entry name" value="Ribonuclease PH domain 2-like"/>
    <property type="match status" value="2"/>
</dbReference>
<dbReference type="SUPFAM" id="SSF54211">
    <property type="entry name" value="Ribosomal protein S5 domain 2-like"/>
    <property type="match status" value="2"/>
</dbReference>
<dbReference type="PROSITE" id="PS50084">
    <property type="entry name" value="KH_TYPE_1"/>
    <property type="match status" value="1"/>
</dbReference>
<dbReference type="PROSITE" id="PS50126">
    <property type="entry name" value="S1"/>
    <property type="match status" value="1"/>
</dbReference>
<accession>Q1AW48</accession>
<feature type="chain" id="PRO_0000329822" description="Polyribonucleotide nucleotidyltransferase">
    <location>
        <begin position="1"/>
        <end position="686"/>
    </location>
</feature>
<feature type="domain" description="KH" evidence="1">
    <location>
        <begin position="545"/>
        <end position="604"/>
    </location>
</feature>
<feature type="domain" description="S1 motif" evidence="1">
    <location>
        <begin position="614"/>
        <end position="684"/>
    </location>
</feature>
<feature type="binding site" evidence="1">
    <location>
        <position position="478"/>
    </location>
    <ligand>
        <name>Mg(2+)</name>
        <dbReference type="ChEBI" id="CHEBI:18420"/>
    </ligand>
</feature>
<feature type="binding site" evidence="1">
    <location>
        <position position="484"/>
    </location>
    <ligand>
        <name>Mg(2+)</name>
        <dbReference type="ChEBI" id="CHEBI:18420"/>
    </ligand>
</feature>
<comment type="function">
    <text evidence="1">Involved in mRNA degradation. Catalyzes the phosphorolysis of single-stranded polyribonucleotides processively in the 3'- to 5'-direction.</text>
</comment>
<comment type="catalytic activity">
    <reaction evidence="1">
        <text>RNA(n+1) + phosphate = RNA(n) + a ribonucleoside 5'-diphosphate</text>
        <dbReference type="Rhea" id="RHEA:22096"/>
        <dbReference type="Rhea" id="RHEA-COMP:14527"/>
        <dbReference type="Rhea" id="RHEA-COMP:17342"/>
        <dbReference type="ChEBI" id="CHEBI:43474"/>
        <dbReference type="ChEBI" id="CHEBI:57930"/>
        <dbReference type="ChEBI" id="CHEBI:140395"/>
        <dbReference type="EC" id="2.7.7.8"/>
    </reaction>
</comment>
<comment type="cofactor">
    <cofactor evidence="1">
        <name>Mg(2+)</name>
        <dbReference type="ChEBI" id="CHEBI:18420"/>
    </cofactor>
</comment>
<comment type="subcellular location">
    <subcellularLocation>
        <location evidence="1">Cytoplasm</location>
    </subcellularLocation>
</comment>
<comment type="similarity">
    <text evidence="1">Belongs to the polyribonucleotide nucleotidyltransferase family.</text>
</comment>